<dbReference type="EC" id="6.2.1.1" evidence="1"/>
<dbReference type="EMBL" id="BX897700">
    <property type="protein sequence ID" value="CAF26692.1"/>
    <property type="molecule type" value="Genomic_DNA"/>
</dbReference>
<dbReference type="SMR" id="Q6FYL4"/>
<dbReference type="KEGG" id="bqu:BQ12330"/>
<dbReference type="eggNOG" id="COG0365">
    <property type="taxonomic scope" value="Bacteria"/>
</dbReference>
<dbReference type="HOGENOM" id="CLU_000022_3_6_5"/>
<dbReference type="OrthoDB" id="9803968at2"/>
<dbReference type="Proteomes" id="UP000000597">
    <property type="component" value="Chromosome"/>
</dbReference>
<dbReference type="GO" id="GO:0005829">
    <property type="term" value="C:cytosol"/>
    <property type="evidence" value="ECO:0007669"/>
    <property type="project" value="TreeGrafter"/>
</dbReference>
<dbReference type="GO" id="GO:0003987">
    <property type="term" value="F:acetate-CoA ligase activity"/>
    <property type="evidence" value="ECO:0007669"/>
    <property type="project" value="UniProtKB-UniRule"/>
</dbReference>
<dbReference type="GO" id="GO:0016208">
    <property type="term" value="F:AMP binding"/>
    <property type="evidence" value="ECO:0007669"/>
    <property type="project" value="InterPro"/>
</dbReference>
<dbReference type="GO" id="GO:0005524">
    <property type="term" value="F:ATP binding"/>
    <property type="evidence" value="ECO:0007669"/>
    <property type="project" value="UniProtKB-KW"/>
</dbReference>
<dbReference type="GO" id="GO:0046872">
    <property type="term" value="F:metal ion binding"/>
    <property type="evidence" value="ECO:0007669"/>
    <property type="project" value="UniProtKB-KW"/>
</dbReference>
<dbReference type="GO" id="GO:0019427">
    <property type="term" value="P:acetyl-CoA biosynthetic process from acetate"/>
    <property type="evidence" value="ECO:0007669"/>
    <property type="project" value="InterPro"/>
</dbReference>
<dbReference type="CDD" id="cd05966">
    <property type="entry name" value="ACS"/>
    <property type="match status" value="1"/>
</dbReference>
<dbReference type="FunFam" id="3.30.300.30:FF:000004">
    <property type="entry name" value="Acetyl-coenzyme A synthetase"/>
    <property type="match status" value="1"/>
</dbReference>
<dbReference type="FunFam" id="3.40.50.12780:FF:000001">
    <property type="entry name" value="Acetyl-coenzyme A synthetase"/>
    <property type="match status" value="1"/>
</dbReference>
<dbReference type="Gene3D" id="3.30.300.30">
    <property type="match status" value="1"/>
</dbReference>
<dbReference type="Gene3D" id="3.40.50.12780">
    <property type="entry name" value="N-terminal domain of ligase-like"/>
    <property type="match status" value="1"/>
</dbReference>
<dbReference type="HAMAP" id="MF_01123">
    <property type="entry name" value="Ac_CoA_synth"/>
    <property type="match status" value="1"/>
</dbReference>
<dbReference type="InterPro" id="IPR011904">
    <property type="entry name" value="Ac_CoA_lig"/>
</dbReference>
<dbReference type="InterPro" id="IPR032387">
    <property type="entry name" value="ACAS_N"/>
</dbReference>
<dbReference type="InterPro" id="IPR025110">
    <property type="entry name" value="AMP-bd_C"/>
</dbReference>
<dbReference type="InterPro" id="IPR045851">
    <property type="entry name" value="AMP-bd_C_sf"/>
</dbReference>
<dbReference type="InterPro" id="IPR020845">
    <property type="entry name" value="AMP-binding_CS"/>
</dbReference>
<dbReference type="InterPro" id="IPR000873">
    <property type="entry name" value="AMP-dep_synth/lig_dom"/>
</dbReference>
<dbReference type="InterPro" id="IPR042099">
    <property type="entry name" value="ANL_N_sf"/>
</dbReference>
<dbReference type="NCBIfam" id="TIGR02188">
    <property type="entry name" value="Ac_CoA_lig_AcsA"/>
    <property type="match status" value="1"/>
</dbReference>
<dbReference type="NCBIfam" id="NF001208">
    <property type="entry name" value="PRK00174.1"/>
    <property type="match status" value="1"/>
</dbReference>
<dbReference type="PANTHER" id="PTHR24095">
    <property type="entry name" value="ACETYL-COENZYME A SYNTHETASE"/>
    <property type="match status" value="1"/>
</dbReference>
<dbReference type="PANTHER" id="PTHR24095:SF14">
    <property type="entry name" value="ACETYL-COENZYME A SYNTHETASE 1"/>
    <property type="match status" value="1"/>
</dbReference>
<dbReference type="Pfam" id="PF16177">
    <property type="entry name" value="ACAS_N"/>
    <property type="match status" value="1"/>
</dbReference>
<dbReference type="Pfam" id="PF00501">
    <property type="entry name" value="AMP-binding"/>
    <property type="match status" value="1"/>
</dbReference>
<dbReference type="Pfam" id="PF13193">
    <property type="entry name" value="AMP-binding_C"/>
    <property type="match status" value="1"/>
</dbReference>
<dbReference type="SUPFAM" id="SSF56801">
    <property type="entry name" value="Acetyl-CoA synthetase-like"/>
    <property type="match status" value="1"/>
</dbReference>
<dbReference type="PROSITE" id="PS00455">
    <property type="entry name" value="AMP_BINDING"/>
    <property type="match status" value="1"/>
</dbReference>
<proteinExistence type="inferred from homology"/>
<organism>
    <name type="scientific">Bartonella quintana (strain Toulouse)</name>
    <name type="common">Rochalimaea quintana</name>
    <dbReference type="NCBI Taxonomy" id="283165"/>
    <lineage>
        <taxon>Bacteria</taxon>
        <taxon>Pseudomonadati</taxon>
        <taxon>Pseudomonadota</taxon>
        <taxon>Alphaproteobacteria</taxon>
        <taxon>Hyphomicrobiales</taxon>
        <taxon>Bartonellaceae</taxon>
        <taxon>Bartonella</taxon>
    </lineage>
</organism>
<sequence length="652" mass="73513">MSEKIYPVPTDIKKNALINEETYQKWYRESINDPEAFWAKHGQRIEWFKPYTKVKNTSFNGDVSIQWYEDGITNVAYNCIDRHLKNSGNHIALIWEGNNPYHDKKITYNELYEHVCRFANILKNHGVKKGDRVTIYLPMIPEAAYAMLACARIGAIHSVIFAGFSSEAIADRIVDCKSTFIITADQGLRGGKLIKLKNNIDHAIDIAARRGVHVNQVLVIRRTSGTIDWVKGRDFWYHEEISHAKTDCPAEMMNAEDPLFILYTSGSTGKPKGVLHTTAGYLVYVSMTHQYVFDYHPGEIYWCTADIGWISGHSYLIYGPLCNGATTLMFEGIPTFPDQGRFWEIVDKHKVNTLYTAPTAIRALMGAGNSFVEHSKRTSLRLLGTVGEPINPEAWKWFYHTVGDNRCPILDTWWQTETGGHMITPLPGATQLKAGSATHPFFGVQLQIIDGEGNVLEGEAEGNLCIIDSWPGQMRTLYNDHERFIETYFSTYKGKYFTGDGCKRDNDGYYWITGRIDDILNVSGHRLGTAEIESALVSHPAISEAAVVGYPHPIKGQGIYSFVTLMEGITPSEELYKDLIQHVKKEIGSIALLDKIQFTPQLPKTRSGKIMRRILRKIAENDFDNLGDISTLAEPQVVDDLIANRQNTEATA</sequence>
<name>ACSA_BARQU</name>
<keyword id="KW-0007">Acetylation</keyword>
<keyword id="KW-0067">ATP-binding</keyword>
<keyword id="KW-0436">Ligase</keyword>
<keyword id="KW-0460">Magnesium</keyword>
<keyword id="KW-0479">Metal-binding</keyword>
<keyword id="KW-0547">Nucleotide-binding</keyword>
<gene>
    <name evidence="1" type="primary">acsA</name>
    <name type="ordered locus">BQ12330</name>
</gene>
<feature type="chain" id="PRO_1000065271" description="Acetyl-coenzyme A synthetase">
    <location>
        <begin position="1"/>
        <end position="652"/>
    </location>
</feature>
<feature type="binding site" evidence="1">
    <location>
        <begin position="189"/>
        <end position="192"/>
    </location>
    <ligand>
        <name>CoA</name>
        <dbReference type="ChEBI" id="CHEBI:57287"/>
    </ligand>
</feature>
<feature type="binding site" evidence="1">
    <location>
        <position position="311"/>
    </location>
    <ligand>
        <name>CoA</name>
        <dbReference type="ChEBI" id="CHEBI:57287"/>
    </ligand>
</feature>
<feature type="binding site" evidence="1">
    <location>
        <begin position="387"/>
        <end position="389"/>
    </location>
    <ligand>
        <name>ATP</name>
        <dbReference type="ChEBI" id="CHEBI:30616"/>
    </ligand>
</feature>
<feature type="binding site" evidence="1">
    <location>
        <begin position="411"/>
        <end position="416"/>
    </location>
    <ligand>
        <name>ATP</name>
        <dbReference type="ChEBI" id="CHEBI:30616"/>
    </ligand>
</feature>
<feature type="binding site" evidence="1">
    <location>
        <position position="500"/>
    </location>
    <ligand>
        <name>ATP</name>
        <dbReference type="ChEBI" id="CHEBI:30616"/>
    </ligand>
</feature>
<feature type="binding site" evidence="1">
    <location>
        <position position="515"/>
    </location>
    <ligand>
        <name>ATP</name>
        <dbReference type="ChEBI" id="CHEBI:30616"/>
    </ligand>
</feature>
<feature type="binding site" evidence="1">
    <location>
        <position position="523"/>
    </location>
    <ligand>
        <name>CoA</name>
        <dbReference type="ChEBI" id="CHEBI:57287"/>
    </ligand>
</feature>
<feature type="binding site" evidence="1">
    <location>
        <position position="526"/>
    </location>
    <ligand>
        <name>ATP</name>
        <dbReference type="ChEBI" id="CHEBI:30616"/>
    </ligand>
</feature>
<feature type="binding site" evidence="1">
    <location>
        <position position="537"/>
    </location>
    <ligand>
        <name>Mg(2+)</name>
        <dbReference type="ChEBI" id="CHEBI:18420"/>
    </ligand>
</feature>
<feature type="binding site" evidence="1">
    <location>
        <position position="539"/>
    </location>
    <ligand>
        <name>Mg(2+)</name>
        <dbReference type="ChEBI" id="CHEBI:18420"/>
    </ligand>
</feature>
<feature type="binding site" evidence="1">
    <location>
        <position position="542"/>
    </location>
    <ligand>
        <name>Mg(2+)</name>
        <dbReference type="ChEBI" id="CHEBI:18420"/>
    </ligand>
</feature>
<feature type="binding site">
    <location>
        <position position="584"/>
    </location>
    <ligand>
        <name>CoA</name>
        <dbReference type="ChEBI" id="CHEBI:57287"/>
    </ligand>
</feature>
<feature type="modified residue" description="N6-acetyllysine" evidence="1">
    <location>
        <position position="609"/>
    </location>
</feature>
<evidence type="ECO:0000255" key="1">
    <source>
        <dbReference type="HAMAP-Rule" id="MF_01123"/>
    </source>
</evidence>
<accession>Q6FYL4</accession>
<comment type="function">
    <text evidence="1">Catalyzes the conversion of acetate into acetyl-CoA (AcCoA), an essential intermediate at the junction of anabolic and catabolic pathways. AcsA undergoes a two-step reaction. In the first half reaction, AcsA combines acetate with ATP to form acetyl-adenylate (AcAMP) intermediate. In the second half reaction, it can then transfer the acetyl group from AcAMP to the sulfhydryl group of CoA, forming the product AcCoA.</text>
</comment>
<comment type="catalytic activity">
    <reaction evidence="1">
        <text>acetate + ATP + CoA = acetyl-CoA + AMP + diphosphate</text>
        <dbReference type="Rhea" id="RHEA:23176"/>
        <dbReference type="ChEBI" id="CHEBI:30089"/>
        <dbReference type="ChEBI" id="CHEBI:30616"/>
        <dbReference type="ChEBI" id="CHEBI:33019"/>
        <dbReference type="ChEBI" id="CHEBI:57287"/>
        <dbReference type="ChEBI" id="CHEBI:57288"/>
        <dbReference type="ChEBI" id="CHEBI:456215"/>
        <dbReference type="EC" id="6.2.1.1"/>
    </reaction>
</comment>
<comment type="cofactor">
    <cofactor evidence="1">
        <name>Mg(2+)</name>
        <dbReference type="ChEBI" id="CHEBI:18420"/>
    </cofactor>
</comment>
<comment type="PTM">
    <text evidence="1">Acetylated. Deacetylation by the SIR2-homolog deacetylase activates the enzyme.</text>
</comment>
<comment type="similarity">
    <text evidence="1">Belongs to the ATP-dependent AMP-binding enzyme family.</text>
</comment>
<protein>
    <recommendedName>
        <fullName evidence="1">Acetyl-coenzyme A synthetase</fullName>
        <shortName evidence="1">AcCoA synthetase</shortName>
        <shortName evidence="1">Acs</shortName>
        <ecNumber evidence="1">6.2.1.1</ecNumber>
    </recommendedName>
    <alternativeName>
        <fullName evidence="1">Acetate--CoA ligase</fullName>
    </alternativeName>
    <alternativeName>
        <fullName evidence="1">Acyl-activating enzyme</fullName>
    </alternativeName>
</protein>
<reference key="1">
    <citation type="journal article" date="2004" name="Proc. Natl. Acad. Sci. U.S.A.">
        <title>The louse-borne human pathogen Bartonella quintana is a genomic derivative of the zoonotic agent Bartonella henselae.</title>
        <authorList>
            <person name="Alsmark U.C.M."/>
            <person name="Frank A.C."/>
            <person name="Karlberg E.O."/>
            <person name="Legault B.-A."/>
            <person name="Ardell D.H."/>
            <person name="Canbaeck B."/>
            <person name="Eriksson A.-S."/>
            <person name="Naeslund A.K."/>
            <person name="Handley S.A."/>
            <person name="Huvet M."/>
            <person name="La Scola B."/>
            <person name="Holmberg M."/>
            <person name="Andersson S.G.E."/>
        </authorList>
    </citation>
    <scope>NUCLEOTIDE SEQUENCE [LARGE SCALE GENOMIC DNA]</scope>
    <source>
        <strain>Toulouse</strain>
    </source>
</reference>